<name>SYA_BIFLO</name>
<protein>
    <recommendedName>
        <fullName evidence="1">Alanine--tRNA ligase</fullName>
        <ecNumber evidence="1">6.1.1.7</ecNumber>
    </recommendedName>
    <alternativeName>
        <fullName evidence="1">Alanyl-tRNA synthetase</fullName>
        <shortName evidence="1">AlaRS</shortName>
    </alternativeName>
</protein>
<sequence length="893" mass="97444">MRTADIAKRYLDYFAKHDHLIVPSASLISPNPTTLFTIAGMVPFIPYLMGEQTPPKRRMASNQKCVRTLDIDEVGKTTRHGTFFQMLGNFSFGDYFKEEAIHYAWELLTTSQDEGGYGFDPEKLWMTTFTDDDEARSMWINEGVDPEHIQKMGMEDNFWTTGGPGPGGPCSEIYVDRGPAFGKEGGPIADENRYIEIWDLVFENYEVDNVKSKTDLHIVGELENKNIDTGAGLERLAYLLQGKNNIYETDEVFPVIEAAEQLSGLKYGENEDADVRFRVVADHVRSALMIMSDGVRPSNVGRGYVLRRLLRRTVRSMRMLGVTDPVLPTLFPTSKAAMEASYPELNDTFHEVSESAYGEEDAFRRTLETGTTILDVAVNKAKSDSAEPVVAGEDAFKLHDTYGFPIELTLEMAAEQGVKVDEAKFRELMAEQKSRARADALKKRHNVDLSVYDDFKKTLVSPIDFLGYTDMSARAKVIGIMQEGKGSVPAVTGPANVEVILDRTPFYAEAGGQLADQGEILSDDGAVLEVDDVQKPIKDLIVHQCRLTEGTLVVGAEVNANIDLARRGAIARSHTATHMVHKALREELGPQATQRGSEDAPNRLRFDFQWSKAPAKSVISAVEERVNDKLRDNLAVTTKEMKFDDAIALGAMHLFGEKYGDIVRVVSIGEDGWSRELCGGTHVDHVGKIGMVNILSEASIGSGVRRVDAVVGQGAYDFNAREHALVSQLSDKLNARPDELAERVNALLAKLKESDRRLASMYESQLAASVPALVADTKNSAAPVKVAVKNVGHFGAVDALRKTVLDVRAQLGEDAPVVVALAGVNEDDKPMVAVATNEAARKAGIKAGDLVRGAAKVLGGGGGGKPDFAQGGGVDASKIDEALEALKHEAQKA</sequence>
<gene>
    <name evidence="1" type="primary">alaS</name>
    <name type="ordered locus">BL0882</name>
</gene>
<comment type="function">
    <text evidence="1">Catalyzes the attachment of alanine to tRNA(Ala) in a two-step reaction: alanine is first activated by ATP to form Ala-AMP and then transferred to the acceptor end of tRNA(Ala). Also edits incorrectly charged Ser-tRNA(Ala) and Gly-tRNA(Ala) via its editing domain.</text>
</comment>
<comment type="catalytic activity">
    <reaction evidence="1">
        <text>tRNA(Ala) + L-alanine + ATP = L-alanyl-tRNA(Ala) + AMP + diphosphate</text>
        <dbReference type="Rhea" id="RHEA:12540"/>
        <dbReference type="Rhea" id="RHEA-COMP:9657"/>
        <dbReference type="Rhea" id="RHEA-COMP:9923"/>
        <dbReference type="ChEBI" id="CHEBI:30616"/>
        <dbReference type="ChEBI" id="CHEBI:33019"/>
        <dbReference type="ChEBI" id="CHEBI:57972"/>
        <dbReference type="ChEBI" id="CHEBI:78442"/>
        <dbReference type="ChEBI" id="CHEBI:78497"/>
        <dbReference type="ChEBI" id="CHEBI:456215"/>
        <dbReference type="EC" id="6.1.1.7"/>
    </reaction>
</comment>
<comment type="cofactor">
    <cofactor evidence="1">
        <name>Zn(2+)</name>
        <dbReference type="ChEBI" id="CHEBI:29105"/>
    </cofactor>
    <text evidence="1">Binds 1 zinc ion per subunit.</text>
</comment>
<comment type="subcellular location">
    <subcellularLocation>
        <location evidence="1">Cytoplasm</location>
    </subcellularLocation>
</comment>
<comment type="domain">
    <text evidence="1">Consists of three domains; the N-terminal catalytic domain, the editing domain and the C-terminal C-Ala domain. The editing domain removes incorrectly charged amino acids, while the C-Ala domain, along with tRNA(Ala), serves as a bridge to cooperatively bring together the editing and aminoacylation centers thus stimulating deacylation of misacylated tRNAs.</text>
</comment>
<comment type="similarity">
    <text evidence="1">Belongs to the class-II aminoacyl-tRNA synthetase family.</text>
</comment>
<keyword id="KW-0030">Aminoacyl-tRNA synthetase</keyword>
<keyword id="KW-0067">ATP-binding</keyword>
<keyword id="KW-0963">Cytoplasm</keyword>
<keyword id="KW-0436">Ligase</keyword>
<keyword id="KW-0479">Metal-binding</keyword>
<keyword id="KW-0547">Nucleotide-binding</keyword>
<keyword id="KW-0648">Protein biosynthesis</keyword>
<keyword id="KW-1185">Reference proteome</keyword>
<keyword id="KW-0694">RNA-binding</keyword>
<keyword id="KW-0820">tRNA-binding</keyword>
<keyword id="KW-0862">Zinc</keyword>
<proteinExistence type="inferred from homology"/>
<evidence type="ECO:0000255" key="1">
    <source>
        <dbReference type="HAMAP-Rule" id="MF_00036"/>
    </source>
</evidence>
<feature type="chain" id="PRO_0000075066" description="Alanine--tRNA ligase">
    <location>
        <begin position="1"/>
        <end position="893"/>
    </location>
</feature>
<feature type="binding site" evidence="1">
    <location>
        <position position="574"/>
    </location>
    <ligand>
        <name>Zn(2+)</name>
        <dbReference type="ChEBI" id="CHEBI:29105"/>
    </ligand>
</feature>
<feature type="binding site" evidence="1">
    <location>
        <position position="578"/>
    </location>
    <ligand>
        <name>Zn(2+)</name>
        <dbReference type="ChEBI" id="CHEBI:29105"/>
    </ligand>
</feature>
<feature type="binding site" evidence="1">
    <location>
        <position position="678"/>
    </location>
    <ligand>
        <name>Zn(2+)</name>
        <dbReference type="ChEBI" id="CHEBI:29105"/>
    </ligand>
</feature>
<feature type="binding site" evidence="1">
    <location>
        <position position="682"/>
    </location>
    <ligand>
        <name>Zn(2+)</name>
        <dbReference type="ChEBI" id="CHEBI:29105"/>
    </ligand>
</feature>
<organism>
    <name type="scientific">Bifidobacterium longum (strain NCC 2705)</name>
    <dbReference type="NCBI Taxonomy" id="206672"/>
    <lineage>
        <taxon>Bacteria</taxon>
        <taxon>Bacillati</taxon>
        <taxon>Actinomycetota</taxon>
        <taxon>Actinomycetes</taxon>
        <taxon>Bifidobacteriales</taxon>
        <taxon>Bifidobacteriaceae</taxon>
        <taxon>Bifidobacterium</taxon>
    </lineage>
</organism>
<dbReference type="EC" id="6.1.1.7" evidence="1"/>
<dbReference type="EMBL" id="AE014295">
    <property type="protein sequence ID" value="AAN24695.1"/>
    <property type="molecule type" value="Genomic_DNA"/>
</dbReference>
<dbReference type="RefSeq" id="NP_696059.1">
    <property type="nucleotide sequence ID" value="NC_004307.2"/>
</dbReference>
<dbReference type="RefSeq" id="WP_007053385.1">
    <property type="nucleotide sequence ID" value="NC_004307.2"/>
</dbReference>
<dbReference type="SMR" id="Q8G5W9"/>
<dbReference type="STRING" id="206672.BL0882"/>
<dbReference type="EnsemblBacteria" id="AAN24695">
    <property type="protein sequence ID" value="AAN24695"/>
    <property type="gene ID" value="BL0882"/>
</dbReference>
<dbReference type="GeneID" id="69577977"/>
<dbReference type="KEGG" id="blo:BL0882"/>
<dbReference type="PATRIC" id="fig|206672.9.peg.578"/>
<dbReference type="HOGENOM" id="CLU_004485_1_1_11"/>
<dbReference type="OrthoDB" id="9803884at2"/>
<dbReference type="PhylomeDB" id="Q8G5W9"/>
<dbReference type="Proteomes" id="UP000000439">
    <property type="component" value="Chromosome"/>
</dbReference>
<dbReference type="GO" id="GO:0005829">
    <property type="term" value="C:cytosol"/>
    <property type="evidence" value="ECO:0007669"/>
    <property type="project" value="TreeGrafter"/>
</dbReference>
<dbReference type="GO" id="GO:0004813">
    <property type="term" value="F:alanine-tRNA ligase activity"/>
    <property type="evidence" value="ECO:0007669"/>
    <property type="project" value="UniProtKB-UniRule"/>
</dbReference>
<dbReference type="GO" id="GO:0002161">
    <property type="term" value="F:aminoacyl-tRNA deacylase activity"/>
    <property type="evidence" value="ECO:0007669"/>
    <property type="project" value="TreeGrafter"/>
</dbReference>
<dbReference type="GO" id="GO:0005524">
    <property type="term" value="F:ATP binding"/>
    <property type="evidence" value="ECO:0007669"/>
    <property type="project" value="UniProtKB-UniRule"/>
</dbReference>
<dbReference type="GO" id="GO:0000049">
    <property type="term" value="F:tRNA binding"/>
    <property type="evidence" value="ECO:0007669"/>
    <property type="project" value="UniProtKB-KW"/>
</dbReference>
<dbReference type="GO" id="GO:0008270">
    <property type="term" value="F:zinc ion binding"/>
    <property type="evidence" value="ECO:0007669"/>
    <property type="project" value="UniProtKB-UniRule"/>
</dbReference>
<dbReference type="GO" id="GO:0006419">
    <property type="term" value="P:alanyl-tRNA aminoacylation"/>
    <property type="evidence" value="ECO:0007669"/>
    <property type="project" value="UniProtKB-UniRule"/>
</dbReference>
<dbReference type="CDD" id="cd00673">
    <property type="entry name" value="AlaRS_core"/>
    <property type="match status" value="1"/>
</dbReference>
<dbReference type="FunFam" id="3.10.310.40:FF:000001">
    <property type="entry name" value="Alanine--tRNA ligase"/>
    <property type="match status" value="1"/>
</dbReference>
<dbReference type="FunFam" id="3.30.54.20:FF:000001">
    <property type="entry name" value="Alanine--tRNA ligase"/>
    <property type="match status" value="1"/>
</dbReference>
<dbReference type="FunFam" id="3.30.980.10:FF:000004">
    <property type="entry name" value="Alanine--tRNA ligase, cytoplasmic"/>
    <property type="match status" value="1"/>
</dbReference>
<dbReference type="Gene3D" id="2.40.30.130">
    <property type="match status" value="1"/>
</dbReference>
<dbReference type="Gene3D" id="3.10.310.40">
    <property type="match status" value="1"/>
</dbReference>
<dbReference type="Gene3D" id="3.30.54.20">
    <property type="match status" value="1"/>
</dbReference>
<dbReference type="Gene3D" id="3.30.930.10">
    <property type="entry name" value="Bira Bifunctional Protein, Domain 2"/>
    <property type="match status" value="1"/>
</dbReference>
<dbReference type="Gene3D" id="3.30.980.10">
    <property type="entry name" value="Threonyl-trna Synthetase, Chain A, domain 2"/>
    <property type="match status" value="1"/>
</dbReference>
<dbReference type="HAMAP" id="MF_00036_B">
    <property type="entry name" value="Ala_tRNA_synth_B"/>
    <property type="match status" value="1"/>
</dbReference>
<dbReference type="InterPro" id="IPR045864">
    <property type="entry name" value="aa-tRNA-synth_II/BPL/LPL"/>
</dbReference>
<dbReference type="InterPro" id="IPR002318">
    <property type="entry name" value="Ala-tRNA-lgiase_IIc"/>
</dbReference>
<dbReference type="InterPro" id="IPR018162">
    <property type="entry name" value="Ala-tRNA-ligase_IIc_anticod-bd"/>
</dbReference>
<dbReference type="InterPro" id="IPR018165">
    <property type="entry name" value="Ala-tRNA-synth_IIc_core"/>
</dbReference>
<dbReference type="InterPro" id="IPR018164">
    <property type="entry name" value="Ala-tRNA-synth_IIc_N"/>
</dbReference>
<dbReference type="InterPro" id="IPR050058">
    <property type="entry name" value="Ala-tRNA_ligase"/>
</dbReference>
<dbReference type="InterPro" id="IPR023033">
    <property type="entry name" value="Ala_tRNA_ligase_euk/bac"/>
</dbReference>
<dbReference type="InterPro" id="IPR003156">
    <property type="entry name" value="DHHA1_dom"/>
</dbReference>
<dbReference type="InterPro" id="IPR018163">
    <property type="entry name" value="Thr/Ala-tRNA-synth_IIc_edit"/>
</dbReference>
<dbReference type="InterPro" id="IPR009000">
    <property type="entry name" value="Transl_B-barrel_sf"/>
</dbReference>
<dbReference type="InterPro" id="IPR012947">
    <property type="entry name" value="tRNA_SAD"/>
</dbReference>
<dbReference type="NCBIfam" id="TIGR00344">
    <property type="entry name" value="alaS"/>
    <property type="match status" value="1"/>
</dbReference>
<dbReference type="PANTHER" id="PTHR11777:SF9">
    <property type="entry name" value="ALANINE--TRNA LIGASE, CYTOPLASMIC"/>
    <property type="match status" value="1"/>
</dbReference>
<dbReference type="PANTHER" id="PTHR11777">
    <property type="entry name" value="ALANYL-TRNA SYNTHETASE"/>
    <property type="match status" value="1"/>
</dbReference>
<dbReference type="Pfam" id="PF02272">
    <property type="entry name" value="DHHA1"/>
    <property type="match status" value="1"/>
</dbReference>
<dbReference type="Pfam" id="PF01411">
    <property type="entry name" value="tRNA-synt_2c"/>
    <property type="match status" value="1"/>
</dbReference>
<dbReference type="Pfam" id="PF07973">
    <property type="entry name" value="tRNA_SAD"/>
    <property type="match status" value="1"/>
</dbReference>
<dbReference type="PRINTS" id="PR00980">
    <property type="entry name" value="TRNASYNTHALA"/>
</dbReference>
<dbReference type="SMART" id="SM00863">
    <property type="entry name" value="tRNA_SAD"/>
    <property type="match status" value="1"/>
</dbReference>
<dbReference type="SUPFAM" id="SSF55681">
    <property type="entry name" value="Class II aaRS and biotin synthetases"/>
    <property type="match status" value="1"/>
</dbReference>
<dbReference type="SUPFAM" id="SSF101353">
    <property type="entry name" value="Putative anticodon-binding domain of alanyl-tRNA synthetase (AlaRS)"/>
    <property type="match status" value="1"/>
</dbReference>
<dbReference type="SUPFAM" id="SSF55186">
    <property type="entry name" value="ThrRS/AlaRS common domain"/>
    <property type="match status" value="1"/>
</dbReference>
<dbReference type="SUPFAM" id="SSF50447">
    <property type="entry name" value="Translation proteins"/>
    <property type="match status" value="1"/>
</dbReference>
<dbReference type="PROSITE" id="PS50860">
    <property type="entry name" value="AA_TRNA_LIGASE_II_ALA"/>
    <property type="match status" value="1"/>
</dbReference>
<reference key="1">
    <citation type="journal article" date="2002" name="Proc. Natl. Acad. Sci. U.S.A.">
        <title>The genome sequence of Bifidobacterium longum reflects its adaptation to the human gastrointestinal tract.</title>
        <authorList>
            <person name="Schell M.A."/>
            <person name="Karmirantzou M."/>
            <person name="Snel B."/>
            <person name="Vilanova D."/>
            <person name="Berger B."/>
            <person name="Pessi G."/>
            <person name="Zwahlen M.-C."/>
            <person name="Desiere F."/>
            <person name="Bork P."/>
            <person name="Delley M."/>
            <person name="Pridmore R.D."/>
            <person name="Arigoni F."/>
        </authorList>
    </citation>
    <scope>NUCLEOTIDE SEQUENCE [LARGE SCALE GENOMIC DNA]</scope>
    <source>
        <strain>NCC 2705</strain>
    </source>
</reference>
<accession>Q8G5W9</accession>